<reference key="1">
    <citation type="journal article" date="2007" name="Proc. Natl. Acad. Sci. U.S.A.">
        <title>Genome sequencing reveals complex secondary metabolome in the marine actinomycete Salinispora tropica.</title>
        <authorList>
            <person name="Udwary D.W."/>
            <person name="Zeigler L."/>
            <person name="Asolkar R.N."/>
            <person name="Singan V."/>
            <person name="Lapidus A."/>
            <person name="Fenical W."/>
            <person name="Jensen P.R."/>
            <person name="Moore B.S."/>
        </authorList>
    </citation>
    <scope>NUCLEOTIDE SEQUENCE [LARGE SCALE GENOMIC DNA]</scope>
    <source>
        <strain>ATCC BAA-916 / DSM 44818 / JCM 13857 / NBRC 105044 / CNB-440</strain>
    </source>
</reference>
<comment type="function">
    <text evidence="1">Negatively regulates transcription of bacterial ribonucleotide reductase nrd genes and operons by binding to NrdR-boxes.</text>
</comment>
<comment type="cofactor">
    <cofactor evidence="1">
        <name>Zn(2+)</name>
        <dbReference type="ChEBI" id="CHEBI:29105"/>
    </cofactor>
    <text evidence="1">Binds 1 zinc ion.</text>
</comment>
<comment type="similarity">
    <text evidence="1">Belongs to the NrdR family.</text>
</comment>
<evidence type="ECO:0000255" key="1">
    <source>
        <dbReference type="HAMAP-Rule" id="MF_00440"/>
    </source>
</evidence>
<gene>
    <name evidence="1" type="primary">nrdR</name>
    <name type="ordered locus">Strop_1452</name>
</gene>
<organism>
    <name type="scientific">Salinispora tropica (strain ATCC BAA-916 / DSM 44818 / JCM 13857 / NBRC 105044 / CNB-440)</name>
    <dbReference type="NCBI Taxonomy" id="369723"/>
    <lineage>
        <taxon>Bacteria</taxon>
        <taxon>Bacillati</taxon>
        <taxon>Actinomycetota</taxon>
        <taxon>Actinomycetes</taxon>
        <taxon>Micromonosporales</taxon>
        <taxon>Micromonosporaceae</taxon>
        <taxon>Salinispora</taxon>
    </lineage>
</organism>
<feature type="chain" id="PRO_1000080819" description="Transcriptional repressor NrdR">
    <location>
        <begin position="1"/>
        <end position="154"/>
    </location>
</feature>
<feature type="domain" description="ATP-cone" evidence="1">
    <location>
        <begin position="46"/>
        <end position="136"/>
    </location>
</feature>
<feature type="zinc finger region" evidence="1">
    <location>
        <begin position="3"/>
        <end position="34"/>
    </location>
</feature>
<sequence>MRCPYCRHPDSRVVDSREADDGQLIRRRRSCPECGKRFTTVEEAILAVVKRSGVTEPFSRTKIIGGVRKACQGRPVDDDSVALLAQKVEETVRAKGAAELPSHEVGLAILGPLRDLDEVAYLRFASVYRSFESLADFEREIETLRTAAQAREGG</sequence>
<keyword id="KW-0067">ATP-binding</keyword>
<keyword id="KW-0238">DNA-binding</keyword>
<keyword id="KW-0479">Metal-binding</keyword>
<keyword id="KW-0547">Nucleotide-binding</keyword>
<keyword id="KW-1185">Reference proteome</keyword>
<keyword id="KW-0678">Repressor</keyword>
<keyword id="KW-0804">Transcription</keyword>
<keyword id="KW-0805">Transcription regulation</keyword>
<keyword id="KW-0862">Zinc</keyword>
<keyword id="KW-0863">Zinc-finger</keyword>
<name>NRDR_SALTO</name>
<dbReference type="EMBL" id="CP000667">
    <property type="protein sequence ID" value="ABP53918.1"/>
    <property type="molecule type" value="Genomic_DNA"/>
</dbReference>
<dbReference type="RefSeq" id="WP_011905350.1">
    <property type="nucleotide sequence ID" value="NC_009380.1"/>
</dbReference>
<dbReference type="SMR" id="A4X4W8"/>
<dbReference type="STRING" id="369723.Strop_1452"/>
<dbReference type="KEGG" id="stp:Strop_1452"/>
<dbReference type="PATRIC" id="fig|369723.5.peg.1481"/>
<dbReference type="eggNOG" id="COG1327">
    <property type="taxonomic scope" value="Bacteria"/>
</dbReference>
<dbReference type="HOGENOM" id="CLU_108412_1_0_11"/>
<dbReference type="Proteomes" id="UP000000235">
    <property type="component" value="Chromosome"/>
</dbReference>
<dbReference type="GO" id="GO:0005524">
    <property type="term" value="F:ATP binding"/>
    <property type="evidence" value="ECO:0007669"/>
    <property type="project" value="UniProtKB-KW"/>
</dbReference>
<dbReference type="GO" id="GO:0003677">
    <property type="term" value="F:DNA binding"/>
    <property type="evidence" value="ECO:0007669"/>
    <property type="project" value="UniProtKB-KW"/>
</dbReference>
<dbReference type="GO" id="GO:0008270">
    <property type="term" value="F:zinc ion binding"/>
    <property type="evidence" value="ECO:0007669"/>
    <property type="project" value="UniProtKB-UniRule"/>
</dbReference>
<dbReference type="GO" id="GO:0045892">
    <property type="term" value="P:negative regulation of DNA-templated transcription"/>
    <property type="evidence" value="ECO:0007669"/>
    <property type="project" value="UniProtKB-UniRule"/>
</dbReference>
<dbReference type="HAMAP" id="MF_00440">
    <property type="entry name" value="NrdR"/>
    <property type="match status" value="1"/>
</dbReference>
<dbReference type="InterPro" id="IPR005144">
    <property type="entry name" value="ATP-cone_dom"/>
</dbReference>
<dbReference type="InterPro" id="IPR055173">
    <property type="entry name" value="NrdR-like_N"/>
</dbReference>
<dbReference type="InterPro" id="IPR003796">
    <property type="entry name" value="RNR_NrdR-like"/>
</dbReference>
<dbReference type="NCBIfam" id="TIGR00244">
    <property type="entry name" value="transcriptional regulator NrdR"/>
    <property type="match status" value="1"/>
</dbReference>
<dbReference type="PANTHER" id="PTHR30455">
    <property type="entry name" value="TRANSCRIPTIONAL REPRESSOR NRDR"/>
    <property type="match status" value="1"/>
</dbReference>
<dbReference type="PANTHER" id="PTHR30455:SF2">
    <property type="entry name" value="TRANSCRIPTIONAL REPRESSOR NRDR"/>
    <property type="match status" value="1"/>
</dbReference>
<dbReference type="Pfam" id="PF03477">
    <property type="entry name" value="ATP-cone"/>
    <property type="match status" value="1"/>
</dbReference>
<dbReference type="Pfam" id="PF22811">
    <property type="entry name" value="Zn_ribbon_NrdR"/>
    <property type="match status" value="1"/>
</dbReference>
<dbReference type="PROSITE" id="PS51161">
    <property type="entry name" value="ATP_CONE"/>
    <property type="match status" value="1"/>
</dbReference>
<proteinExistence type="inferred from homology"/>
<protein>
    <recommendedName>
        <fullName evidence="1">Transcriptional repressor NrdR</fullName>
    </recommendedName>
</protein>
<accession>A4X4W8</accession>